<organismHost>
    <name type="scientific">Homo sapiens</name>
    <name type="common">Human</name>
    <dbReference type="NCBI Taxonomy" id="9606"/>
</organismHost>
<sequence>MGQTVTTPLSLTLQHWGDVQRIASNQSVDVKKRRWVTFCSAEWPTFNVGWPQDGTFNLGIISQVKSRVFCPGPHGHPDQVPYIVTWEALAYDPPPWVKPFVSPKPPPLPTAPVLPPGPSAQPPSRSALYPALTPSIKSKPPKPQVLPDSGGPLIDLLTEDPPPYGAQPSSSARENNEEEAATTSEVSPPSPMVSRLRGRRDPPAADSTTSQAFPLRMGGDGQLQYWPFSSSDLYNWKNNNPSFSEDPGKLTALIESVLITHQPTWDDCQQLLGTLLTGEEKQRVLLEARKAVRGNDGRPTQLPNEVNAAFPLERPDWGYTTTEGRNHLVLYRQLLLAGLQNAGRSPTNLAKVKGITQGPNESPSAFLERLKEAYRRYTPYDPEDPGQETNVSMSFIWQSAPDIGRKLERLEDLKSKTLGDLVREAEKIFNKRETPEEREERIRREIEEKEERRRAEDEQRERERDRRRHREMSKLLATVVIGQRQDRQGGERRRPQLDKDQCAYCKEKGHWAKDCPKKPRGPRGPRPQTSLLTLGD</sequence>
<reference key="1">
    <citation type="journal article" date="2006" name="PLoS Pathog.">
        <title>Identification of a novel Gammaretrovirus in prostate tumors of patients homozygous for R462Q RNASEL variant.</title>
        <authorList>
            <person name="Urisman A."/>
            <person name="Molinaro R.J."/>
            <person name="Fischer N."/>
            <person name="Plummer S.J."/>
            <person name="Casey G."/>
            <person name="Klein E.A."/>
            <person name="Malathi K."/>
            <person name="Magi-Galluzzi C."/>
            <person name="Tubbs R.R."/>
            <person name="Ganem D."/>
            <person name="Silverman R.H."/>
            <person name="DeRisi J.L."/>
        </authorList>
    </citation>
    <scope>NUCLEOTIDE SEQUENCE [GENOMIC RNA]</scope>
    <scope>RETRACTED PAPER</scope>
</reference>
<reference key="2">
    <citation type="journal article" date="2012" name="PLoS Pathog.">
        <authorList>
            <person name="Urisman A."/>
            <person name="Molinaro R.J."/>
            <person name="Fischer N."/>
            <person name="Plummer S.J."/>
            <person name="Casey G."/>
            <person name="Klein E.A."/>
            <person name="Malathi K."/>
            <person name="Magi-Galluzzi C."/>
            <person name="Tubbs R.R."/>
            <person name="Ganem D."/>
            <person name="Silverman R.H."/>
            <person name="DeRisi J.L."/>
        </authorList>
    </citation>
    <scope>RETRACTION NOTICE OF PUBMED:16609730</scope>
</reference>
<gene>
    <name type="primary">gag</name>
</gene>
<dbReference type="EMBL" id="DQ241302">
    <property type="protein sequence ID" value="ABB83227.1"/>
    <property type="molecule type" value="Genomic_RNA"/>
</dbReference>
<dbReference type="SMR" id="Q2F7I9"/>
<dbReference type="Proteomes" id="UP000008602">
    <property type="component" value="Genome"/>
</dbReference>
<dbReference type="GO" id="GO:0044185">
    <property type="term" value="C:host cell late endosome membrane"/>
    <property type="evidence" value="ECO:0007669"/>
    <property type="project" value="UniProtKB-SubCell"/>
</dbReference>
<dbReference type="GO" id="GO:0020002">
    <property type="term" value="C:host cell plasma membrane"/>
    <property type="evidence" value="ECO:0007669"/>
    <property type="project" value="UniProtKB-SubCell"/>
</dbReference>
<dbReference type="GO" id="GO:0072494">
    <property type="term" value="C:host multivesicular body"/>
    <property type="evidence" value="ECO:0007669"/>
    <property type="project" value="UniProtKB-SubCell"/>
</dbReference>
<dbReference type="GO" id="GO:0016020">
    <property type="term" value="C:membrane"/>
    <property type="evidence" value="ECO:0007669"/>
    <property type="project" value="UniProtKB-KW"/>
</dbReference>
<dbReference type="GO" id="GO:0019013">
    <property type="term" value="C:viral nucleocapsid"/>
    <property type="evidence" value="ECO:0007669"/>
    <property type="project" value="UniProtKB-KW"/>
</dbReference>
<dbReference type="GO" id="GO:0003723">
    <property type="term" value="F:RNA binding"/>
    <property type="evidence" value="ECO:0007669"/>
    <property type="project" value="UniProtKB-KW"/>
</dbReference>
<dbReference type="GO" id="GO:0008270">
    <property type="term" value="F:zinc ion binding"/>
    <property type="evidence" value="ECO:0007669"/>
    <property type="project" value="UniProtKB-KW"/>
</dbReference>
<dbReference type="GO" id="GO:0039702">
    <property type="term" value="P:viral budding via host ESCRT complex"/>
    <property type="evidence" value="ECO:0007669"/>
    <property type="project" value="UniProtKB-KW"/>
</dbReference>
<dbReference type="FunFam" id="1.10.150.180:FF:000001">
    <property type="entry name" value="Gag polyprotein"/>
    <property type="match status" value="1"/>
</dbReference>
<dbReference type="FunFam" id="1.10.375.10:FF:000008">
    <property type="entry name" value="Gag polyprotein"/>
    <property type="match status" value="1"/>
</dbReference>
<dbReference type="Gene3D" id="1.10.150.180">
    <property type="entry name" value="Gamma-retroviral matrix domain"/>
    <property type="match status" value="1"/>
</dbReference>
<dbReference type="Gene3D" id="1.10.375.10">
    <property type="entry name" value="Human Immunodeficiency Virus Type 1 Capsid Protein"/>
    <property type="match status" value="1"/>
</dbReference>
<dbReference type="Gene3D" id="4.10.60.10">
    <property type="entry name" value="Zinc finger, CCHC-type"/>
    <property type="match status" value="1"/>
</dbReference>
<dbReference type="InterPro" id="IPR000840">
    <property type="entry name" value="G_retro_matrix"/>
</dbReference>
<dbReference type="InterPro" id="IPR036946">
    <property type="entry name" value="G_retro_matrix_sf"/>
</dbReference>
<dbReference type="InterPro" id="IPR002079">
    <property type="entry name" value="Gag_p12"/>
</dbReference>
<dbReference type="InterPro" id="IPR003036">
    <property type="entry name" value="Gag_P30"/>
</dbReference>
<dbReference type="InterPro" id="IPR008919">
    <property type="entry name" value="Retrov_capsid_N"/>
</dbReference>
<dbReference type="InterPro" id="IPR050462">
    <property type="entry name" value="Retroviral_Gag-Pol_poly"/>
</dbReference>
<dbReference type="InterPro" id="IPR010999">
    <property type="entry name" value="Retrovr_matrix"/>
</dbReference>
<dbReference type="InterPro" id="IPR001878">
    <property type="entry name" value="Znf_CCHC"/>
</dbReference>
<dbReference type="InterPro" id="IPR036875">
    <property type="entry name" value="Znf_CCHC_sf"/>
</dbReference>
<dbReference type="PANTHER" id="PTHR33166">
    <property type="entry name" value="GAG_P30 DOMAIN-CONTAINING PROTEIN"/>
    <property type="match status" value="1"/>
</dbReference>
<dbReference type="Pfam" id="PF01140">
    <property type="entry name" value="Gag_MA"/>
    <property type="match status" value="1"/>
</dbReference>
<dbReference type="Pfam" id="PF01141">
    <property type="entry name" value="Gag_p12"/>
    <property type="match status" value="1"/>
</dbReference>
<dbReference type="Pfam" id="PF02093">
    <property type="entry name" value="Gag_p30"/>
    <property type="match status" value="1"/>
</dbReference>
<dbReference type="Pfam" id="PF00098">
    <property type="entry name" value="zf-CCHC"/>
    <property type="match status" value="1"/>
</dbReference>
<dbReference type="SMART" id="SM00343">
    <property type="entry name" value="ZnF_C2HC"/>
    <property type="match status" value="1"/>
</dbReference>
<dbReference type="SUPFAM" id="SSF47836">
    <property type="entry name" value="Retroviral matrix proteins"/>
    <property type="match status" value="1"/>
</dbReference>
<dbReference type="SUPFAM" id="SSF47943">
    <property type="entry name" value="Retrovirus capsid protein, N-terminal core domain"/>
    <property type="match status" value="1"/>
</dbReference>
<dbReference type="SUPFAM" id="SSF57756">
    <property type="entry name" value="Retrovirus zinc finger-like domains"/>
    <property type="match status" value="1"/>
</dbReference>
<dbReference type="PROSITE" id="PS50158">
    <property type="entry name" value="ZF_CCHC"/>
    <property type="match status" value="1"/>
</dbReference>
<protein>
    <recommendedName>
        <fullName>Gag polyprotein</fullName>
        <shortName>Pr65gag</shortName>
    </recommendedName>
    <alternativeName>
        <fullName>Core polyprotein</fullName>
    </alternativeName>
    <component>
        <recommendedName>
            <fullName>Matrix protein p15</fullName>
            <shortName>MA</shortName>
        </recommendedName>
    </component>
    <component>
        <recommendedName>
            <fullName>RNA-binding phosphoprotein p12</fullName>
        </recommendedName>
        <alternativeName>
            <fullName>pp12</fullName>
        </alternativeName>
    </component>
    <component>
        <recommendedName>
            <fullName>Capsid protein p30</fullName>
            <shortName>CA</shortName>
        </recommendedName>
    </component>
    <component>
        <recommendedName>
            <fullName>Nucleocapsid protein p10-gag</fullName>
            <shortName>NC-gag</shortName>
        </recommendedName>
    </component>
</protein>
<accession>Q2F7I9</accession>
<keyword id="KW-0167">Capsid protein</keyword>
<keyword id="KW-0175">Coiled coil</keyword>
<keyword id="KW-1032">Host cell membrane</keyword>
<keyword id="KW-1039">Host endosome</keyword>
<keyword id="KW-1043">Host membrane</keyword>
<keyword id="KW-0945">Host-virus interaction</keyword>
<keyword id="KW-0449">Lipoprotein</keyword>
<keyword id="KW-0472">Membrane</keyword>
<keyword id="KW-0479">Metal-binding</keyword>
<keyword id="KW-0519">Myristate</keyword>
<keyword id="KW-0597">Phosphoprotein</keyword>
<keyword id="KW-0694">RNA-binding</keyword>
<keyword id="KW-1198">Viral budding</keyword>
<keyword id="KW-1187">Viral budding via the host ESCRT complexes</keyword>
<keyword id="KW-0543">Viral nucleoprotein</keyword>
<keyword id="KW-1188">Viral release from host cell</keyword>
<keyword id="KW-0946">Virion</keyword>
<keyword id="KW-0862">Zinc</keyword>
<keyword id="KW-0863">Zinc-finger</keyword>
<evidence type="ECO:0000250" key="1"/>
<evidence type="ECO:0000250" key="2">
    <source>
        <dbReference type="UniProtKB" id="P03332"/>
    </source>
</evidence>
<evidence type="ECO:0000250" key="3">
    <source>
        <dbReference type="UniProtKB" id="P03336"/>
    </source>
</evidence>
<evidence type="ECO:0000250" key="4">
    <source>
        <dbReference type="UniProtKB" id="P03355"/>
    </source>
</evidence>
<evidence type="ECO:0000255" key="5"/>
<evidence type="ECO:0000255" key="6">
    <source>
        <dbReference type="PROSITE-ProRule" id="PRU00047"/>
    </source>
</evidence>
<evidence type="ECO:0000256" key="7">
    <source>
        <dbReference type="SAM" id="MobiDB-lite"/>
    </source>
</evidence>
<evidence type="ECO:0000305" key="8"/>
<evidence type="ECO:0000305" key="9">
    <source>
    </source>
</evidence>
<evidence type="ECO:0000305" key="10">
    <source>
    </source>
</evidence>
<comment type="function">
    <molecule>Gag polyprotein</molecule>
    <text evidence="2">Plays a role in budding and is processed by the viral protease during virion maturation outside the cell. During budding, it recruits, in a PPXY-dependent or independent manner, Nedd4-like ubiquitin ligases that conjugate ubiquitin molecules to Gag, or to Gag binding host factors. Interaction with HECT ubiquitin ligases probably link the viral protein to the host ESCRT pathway and facilitate release.</text>
</comment>
<comment type="function">
    <molecule>Matrix protein p15</molecule>
    <text evidence="2">Targets Gag and gag-pol polyproteins to the plasma membrane via a multipartite membrane binding signal, that includes its myristoylated N-terminus. Also mediates nuclear localization of the pre-integration complex.</text>
</comment>
<comment type="function">
    <molecule>Capsid protein p30</molecule>
    <text evidence="3">Forms the spherical core of the virion that encapsulates the genomic RNA-nucleocapsid complex.</text>
</comment>
<comment type="function">
    <molecule>Nucleocapsid protein p10-gag</molecule>
    <text evidence="2 4">Involved in the packaging and encapsidation of two copies of the genome (By similarity). Binds with high affinity to conserved UCUG elements within the packaging signal, located near the 5'-end of the genome (By similarity). This binding is dependent on genome dimerization (By similarity). Acts as a nucleic acid chaperone which is involved in rearrangement of nucleic acid secondary structures during gRNA retrotranscription (By similarity).</text>
</comment>
<comment type="subunit">
    <molecule>Gag polyprotein</molecule>
    <text evidence="2">Interacts (via PPXY motif) with host NEDD4 (By similarity). Interacts (via PSAP motif) with host TSG101 (By similarity). Interacts (via LYPX(n)L motif) with host PDCD6IP (By similarity).</text>
</comment>
<comment type="subunit">
    <molecule>Capsid protein p30</molecule>
    <text evidence="2">Homohexamer. Further associates as homomultimer. The virus core is composed of a lattice formed from hexagonal rings, each containing six capsid monomers.</text>
</comment>
<comment type="subcellular location">
    <molecule>Gag polyprotein</molecule>
    <subcellularLocation>
        <location evidence="1">Virion</location>
    </subcellularLocation>
    <subcellularLocation>
        <location evidence="8">Host cell membrane</location>
        <topology evidence="8">Lipid-anchor</topology>
    </subcellularLocation>
    <subcellularLocation>
        <location evidence="8">Host late endosome membrane</location>
        <topology evidence="8">Lipid-anchor</topology>
    </subcellularLocation>
    <subcellularLocation>
        <location evidence="1">Host endosome</location>
        <location evidence="1">Host multivesicular body</location>
    </subcellularLocation>
    <text evidence="1">These locations are probably linked to virus assembly sites.</text>
</comment>
<comment type="subcellular location">
    <molecule>Matrix protein p15</molecule>
    <subcellularLocation>
        <location evidence="8">Virion</location>
    </subcellularLocation>
</comment>
<comment type="subcellular location">
    <molecule>Capsid protein p30</molecule>
    <subcellularLocation>
        <location evidence="8">Virion</location>
    </subcellularLocation>
</comment>
<comment type="subcellular location">
    <molecule>Nucleocapsid protein p10-gag</molecule>
    <subcellularLocation>
        <location evidence="8">Virion</location>
    </subcellularLocation>
</comment>
<comment type="domain">
    <molecule>Gag polyprotein</molecule>
    <text evidence="2">Late-budding domains (L domains) are short sequence motifs essential for viral particle budding. They recruit proteins of the host ESCRT machinery (Endosomal Sorting Complex Required for Transport) or ESCRT-associated proteins. RNA-binding phosphoprotein p12 contains one L domain: a PPXY motif which interacts with the WW domain 3 of NEDD4 E3 ubiquitin ligase. PPXY motif is essential for virus egress. Matrix protein p15 contains one L domain: a PTAP/PSAP motif, which interacts with the UEV domain of TSG101. The junction between the matrix protein p15 and RNA-binding phosphoprotein p12 also contains one L domain: a LYPX(n)L motif which interacts with PDCD6IP. Both PSAP and LYPX(n)L domains might play little to no role in budding and possibly drive residual virus release.</text>
</comment>
<comment type="PTM">
    <molecule>Gag polyprotein</molecule>
    <text evidence="2">Specific enzymatic cleavages by the viral protease yield mature proteins. The protease is released by autocatalytic cleavage. The polyprotein is cleaved during and after budding, this process is termed maturation.</text>
</comment>
<comment type="PTM">
    <text evidence="1">RNA-binding phosphoprotein p12 is phosphorylated on serine residues.</text>
</comment>
<comment type="caution">
    <text evidence="9 10">Originally thought to be characterized from prostate tumors, the described gammaretrovirus XMRV is in fact laboratory-derived and there is no association of XMRV with prostate cancer.</text>
</comment>
<organism>
    <name type="scientific">Xenotropic MuLV-related virus (isolate VP42)</name>
    <name type="common">XMRV</name>
    <dbReference type="NCBI Taxonomy" id="356664"/>
    <lineage>
        <taxon>Viruses</taxon>
        <taxon>Riboviria</taxon>
        <taxon>Pararnavirae</taxon>
        <taxon>Artverviricota</taxon>
        <taxon>Revtraviricetes</taxon>
        <taxon>Ortervirales</taxon>
        <taxon>Retroviridae</taxon>
        <taxon>Orthoretrovirinae</taxon>
        <taxon>Gammaretrovirus</taxon>
        <taxon>Murine leukemia-related retroviruses</taxon>
    </lineage>
</organism>
<proteinExistence type="inferred from homology"/>
<name>GAG_XMRV4</name>
<feature type="initiator methionine" description="Removed; by host" evidence="1">
    <location>
        <position position="1"/>
    </location>
</feature>
<feature type="chain" id="PRO_0000390840" description="Gag polyprotein" evidence="1">
    <location>
        <begin position="2"/>
        <end position="536"/>
    </location>
</feature>
<feature type="chain" id="PRO_0000390841" description="Matrix protein p15" evidence="5">
    <location>
        <begin position="2"/>
        <end position="129"/>
    </location>
</feature>
<feature type="chain" id="PRO_0000390842" description="RNA-binding phosphoprotein p12" evidence="5">
    <location>
        <begin position="130"/>
        <end position="213"/>
    </location>
</feature>
<feature type="chain" id="PRO_0000390843" description="Capsid protein p30" evidence="5">
    <location>
        <begin position="214"/>
        <end position="476"/>
    </location>
</feature>
<feature type="chain" id="PRO_0000390844" description="Nucleocapsid protein p10-gag" evidence="5">
    <location>
        <begin position="477"/>
        <end position="536"/>
    </location>
</feature>
<feature type="zinc finger region" description="CCHC-type" evidence="6">
    <location>
        <begin position="500"/>
        <end position="517"/>
    </location>
</feature>
<feature type="region of interest" description="Disordered" evidence="7">
    <location>
        <begin position="108"/>
        <end position="218"/>
    </location>
</feature>
<feature type="region of interest" description="Disordered" evidence="7">
    <location>
        <begin position="449"/>
        <end position="536"/>
    </location>
</feature>
<feature type="coiled-coil region" evidence="5">
    <location>
        <begin position="436"/>
        <end position="476"/>
    </location>
</feature>
<feature type="short sequence motif" description="PTAP/PSAP motif">
    <location>
        <begin position="109"/>
        <end position="112"/>
    </location>
</feature>
<feature type="short sequence motif" description="LYPX(n)L motif">
    <location>
        <begin position="128"/>
        <end position="132"/>
    </location>
</feature>
<feature type="short sequence motif" description="PPXY motif">
    <location>
        <begin position="161"/>
        <end position="164"/>
    </location>
</feature>
<feature type="compositionally biased region" description="Pro residues" evidence="7">
    <location>
        <begin position="108"/>
        <end position="121"/>
    </location>
</feature>
<feature type="compositionally biased region" description="Basic and acidic residues" evidence="7">
    <location>
        <begin position="449"/>
        <end position="464"/>
    </location>
</feature>
<feature type="compositionally biased region" description="Basic and acidic residues" evidence="7">
    <location>
        <begin position="484"/>
        <end position="517"/>
    </location>
</feature>
<feature type="site" description="Cleavage; by viral protease p14" evidence="1">
    <location>
        <begin position="129"/>
        <end position="130"/>
    </location>
</feature>
<feature type="site" description="Cleavage; by viral protease p14" evidence="1">
    <location>
        <begin position="213"/>
        <end position="214"/>
    </location>
</feature>
<feature type="site" description="Cleavage; by viral protease p14" evidence="1">
    <location>
        <begin position="476"/>
        <end position="477"/>
    </location>
</feature>
<feature type="modified residue" description="Phosphoserine; by host" evidence="1">
    <location>
        <position position="190"/>
    </location>
</feature>
<feature type="lipid moiety-binding region" description="N-myristoyl glycine; by host" evidence="1">
    <location>
        <position position="2"/>
    </location>
</feature>